<dbReference type="EMBL" id="AF187041">
    <property type="protein sequence ID" value="AAG17020.1"/>
    <property type="molecule type" value="mRNA"/>
</dbReference>
<dbReference type="PIR" id="A58998">
    <property type="entry name" value="A58998"/>
</dbReference>
<dbReference type="SMR" id="Q9GU69"/>
<dbReference type="GO" id="GO:0005576">
    <property type="term" value="C:extracellular region"/>
    <property type="evidence" value="ECO:0007669"/>
    <property type="project" value="UniProtKB-SubCell"/>
</dbReference>
<dbReference type="GO" id="GO:0008083">
    <property type="term" value="F:growth factor activity"/>
    <property type="evidence" value="ECO:0007669"/>
    <property type="project" value="UniProtKB-KW"/>
</dbReference>
<dbReference type="Gene3D" id="2.10.25.10">
    <property type="entry name" value="Laminin"/>
    <property type="match status" value="1"/>
</dbReference>
<dbReference type="InterPro" id="IPR000742">
    <property type="entry name" value="EGF-like_dom"/>
</dbReference>
<dbReference type="Pfam" id="PF00008">
    <property type="entry name" value="EGF"/>
    <property type="match status" value="1"/>
</dbReference>
<dbReference type="SMART" id="SM00181">
    <property type="entry name" value="EGF"/>
    <property type="match status" value="1"/>
</dbReference>
<dbReference type="SUPFAM" id="SSF57196">
    <property type="entry name" value="EGF/Laminin"/>
    <property type="match status" value="1"/>
</dbReference>
<dbReference type="PROSITE" id="PS00022">
    <property type="entry name" value="EGF_1"/>
    <property type="match status" value="1"/>
</dbReference>
<dbReference type="PROSITE" id="PS01186">
    <property type="entry name" value="EGF_2"/>
    <property type="match status" value="1"/>
</dbReference>
<dbReference type="PROSITE" id="PS50026">
    <property type="entry name" value="EGF_3"/>
    <property type="match status" value="1"/>
</dbReference>
<accession>Q9GU69</accession>
<reference key="1">
    <citation type="journal article" date="2000" name="J. Neurosci.">
        <title>Neurotrophic actions of a novel molluscan epidermal growth factor.</title>
        <authorList>
            <person name="Hermann P.M."/>
            <person name="van Kesteren R.E."/>
            <person name="Wildering W.C."/>
            <person name="Painter S.D."/>
            <person name="Reno J.M."/>
            <person name="Smith J.S."/>
            <person name="Kumar S.B."/>
            <person name="Geraerts W.P."/>
            <person name="Ericsson L.H."/>
            <person name="Smit A.B."/>
            <person name="Bulloch A.G."/>
            <person name="Nagle G.T."/>
        </authorList>
    </citation>
    <scope>NUCLEOTIDE SEQUENCE [MRNA]</scope>
    <scope>PROTEIN SEQUENCE OF 22-64</scope>
    <scope>PYROGLUTAMATE FORMATION AT GLN-22</scope>
    <scope>MASS SPECTROMETRY</scope>
    <scope>FUNCTION</scope>
    <scope>SUBCELLULAR LOCATION</scope>
    <scope>TISSUE SPECIFICITY</scope>
    <scope>DEVELOPMENTAL STAGE</scope>
    <source>
        <tissue>Albumen gland</tissue>
    </source>
</reference>
<proteinExistence type="evidence at protein level"/>
<name>EGF_LYMST</name>
<organism>
    <name type="scientific">Lymnaea stagnalis</name>
    <name type="common">Great pond snail</name>
    <name type="synonym">Helix stagnalis</name>
    <dbReference type="NCBI Taxonomy" id="6523"/>
    <lineage>
        <taxon>Eukaryota</taxon>
        <taxon>Metazoa</taxon>
        <taxon>Spiralia</taxon>
        <taxon>Lophotrochozoa</taxon>
        <taxon>Mollusca</taxon>
        <taxon>Gastropoda</taxon>
        <taxon>Heterobranchia</taxon>
        <taxon>Euthyneura</taxon>
        <taxon>Panpulmonata</taxon>
        <taxon>Hygrophila</taxon>
        <taxon>Lymnaeoidea</taxon>
        <taxon>Lymnaeidae</taxon>
        <taxon>Lymnaea</taxon>
    </lineage>
</organism>
<keyword id="KW-0903">Direct protein sequencing</keyword>
<keyword id="KW-1015">Disulfide bond</keyword>
<keyword id="KW-0245">EGF-like domain</keyword>
<keyword id="KW-0339">Growth factor</keyword>
<keyword id="KW-0873">Pyrrolidone carboxylic acid</keyword>
<keyword id="KW-0964">Secreted</keyword>
<keyword id="KW-0732">Signal</keyword>
<sequence>MMRHLLLVGAAILIFVSDAQAQGDGEDPCQIVRCSYGANCIAYGDTAICECPFGYSGIRCQDPS</sequence>
<protein>
    <recommendedName>
        <fullName>Epidermal growth factor</fullName>
        <shortName>L-EGF</shortName>
    </recommendedName>
</protein>
<comment type="function">
    <text evidence="2">Induces neurite outgrowth in specific adult neurons in vitro (PubMed:10964941).</text>
</comment>
<comment type="subcellular location">
    <subcellularLocation>
        <location evidence="3">Secreted</location>
    </subcellularLocation>
</comment>
<comment type="tissue specificity">
    <text evidence="2">Albumen gland. Up-regulated in adult CNS after axotomy.</text>
</comment>
<comment type="developmental stage">
    <text evidence="2">Expressed throughout embryonic development, in the juvenile CNS, but not in the normal adult.</text>
</comment>
<comment type="mass spectrometry"/>
<comment type="mass spectrometry">
    <text>Reduced with 2-mercaptoethanol.</text>
</comment>
<comment type="mass spectrometry">
    <text>Reduced with 2-mercaptoethanol and alkylated with 4-vinylpyridine.</text>
</comment>
<evidence type="ECO:0000255" key="1">
    <source>
        <dbReference type="PROSITE-ProRule" id="PRU00076"/>
    </source>
</evidence>
<evidence type="ECO:0000269" key="2">
    <source>
    </source>
</evidence>
<evidence type="ECO:0000303" key="3">
    <source>
    </source>
</evidence>
<feature type="signal peptide" evidence="2">
    <location>
        <begin position="1"/>
        <end position="21"/>
    </location>
</feature>
<feature type="chain" id="PRO_0000432755" description="Epidermal growth factor">
    <location>
        <begin position="22"/>
        <end position="64"/>
    </location>
</feature>
<feature type="domain" description="EGF-like" evidence="1">
    <location>
        <begin position="25"/>
        <end position="61"/>
    </location>
</feature>
<feature type="modified residue" description="Pyrrolidone carboxylic acid" evidence="2">
    <location>
        <position position="22"/>
    </location>
</feature>
<feature type="disulfide bond" evidence="1">
    <location>
        <begin position="29"/>
        <end position="40"/>
    </location>
</feature>
<feature type="disulfide bond" evidence="1">
    <location>
        <begin position="34"/>
        <end position="49"/>
    </location>
</feature>
<feature type="disulfide bond" evidence="1">
    <location>
        <begin position="51"/>
        <end position="60"/>
    </location>
</feature>